<dbReference type="EC" id="6.1.1.20" evidence="4"/>
<dbReference type="EMBL" id="AE014297">
    <property type="protein sequence ID" value="AAF56268.1"/>
    <property type="molecule type" value="Genomic_DNA"/>
</dbReference>
<dbReference type="EMBL" id="AY052086">
    <property type="protein sequence ID" value="AAK93510.1"/>
    <property type="molecule type" value="mRNA"/>
</dbReference>
<dbReference type="RefSeq" id="NP_651237.1">
    <property type="nucleotide sequence ID" value="NM_142980.4"/>
</dbReference>
<dbReference type="SMR" id="Q9VCA5"/>
<dbReference type="BioGRID" id="67816">
    <property type="interactions" value="3"/>
</dbReference>
<dbReference type="FunCoup" id="Q9VCA5">
    <property type="interactions" value="2238"/>
</dbReference>
<dbReference type="IntAct" id="Q9VCA5">
    <property type="interactions" value="5"/>
</dbReference>
<dbReference type="STRING" id="7227.FBpp0084021"/>
<dbReference type="PaxDb" id="7227-FBpp0084021"/>
<dbReference type="EnsemblMetazoa" id="FBtr0084637">
    <property type="protein sequence ID" value="FBpp0084021"/>
    <property type="gene ID" value="FBgn0039175"/>
</dbReference>
<dbReference type="GeneID" id="42888"/>
<dbReference type="KEGG" id="dme:Dmel_CG5706"/>
<dbReference type="UCSC" id="CG5706-RA">
    <property type="organism name" value="d. melanogaster"/>
</dbReference>
<dbReference type="AGR" id="FB:FBgn0039175"/>
<dbReference type="CTD" id="42888"/>
<dbReference type="FlyBase" id="FBgn0039175">
    <property type="gene designation" value="beta-PheRS"/>
</dbReference>
<dbReference type="VEuPathDB" id="VectorBase:FBgn0039175"/>
<dbReference type="eggNOG" id="KOG2472">
    <property type="taxonomic scope" value="Eukaryota"/>
</dbReference>
<dbReference type="GeneTree" id="ENSGT00530000063489"/>
<dbReference type="HOGENOM" id="CLU_020279_2_0_1"/>
<dbReference type="InParanoid" id="Q9VCA5"/>
<dbReference type="OMA" id="FPGRCAN"/>
<dbReference type="OrthoDB" id="1698572at2759"/>
<dbReference type="PhylomeDB" id="Q9VCA5"/>
<dbReference type="BioGRID-ORCS" id="42888">
    <property type="hits" value="0 hits in 3 CRISPR screens"/>
</dbReference>
<dbReference type="GenomeRNAi" id="42888"/>
<dbReference type="PRO" id="PR:Q9VCA5"/>
<dbReference type="Proteomes" id="UP000000803">
    <property type="component" value="Chromosome 3R"/>
</dbReference>
<dbReference type="Bgee" id="FBgn0039175">
    <property type="expression patterns" value="Expressed in eye disc (Drosophila) and 63 other cell types or tissues"/>
</dbReference>
<dbReference type="GO" id="GO:0005737">
    <property type="term" value="C:cytoplasm"/>
    <property type="evidence" value="ECO:0000304"/>
    <property type="project" value="FlyBase"/>
</dbReference>
<dbReference type="GO" id="GO:0009328">
    <property type="term" value="C:phenylalanine-tRNA ligase complex"/>
    <property type="evidence" value="ECO:0000318"/>
    <property type="project" value="GO_Central"/>
</dbReference>
<dbReference type="GO" id="GO:0002161">
    <property type="term" value="F:aminoacyl-tRNA deacylase activity"/>
    <property type="evidence" value="ECO:0000316"/>
    <property type="project" value="FlyBase"/>
</dbReference>
<dbReference type="GO" id="GO:0005524">
    <property type="term" value="F:ATP binding"/>
    <property type="evidence" value="ECO:0007669"/>
    <property type="project" value="UniProtKB-KW"/>
</dbReference>
<dbReference type="GO" id="GO:0000287">
    <property type="term" value="F:magnesium ion binding"/>
    <property type="evidence" value="ECO:0000250"/>
    <property type="project" value="UniProtKB"/>
</dbReference>
<dbReference type="GO" id="GO:0004826">
    <property type="term" value="F:phenylalanine-tRNA ligase activity"/>
    <property type="evidence" value="ECO:0000314"/>
    <property type="project" value="FlyBase"/>
</dbReference>
<dbReference type="GO" id="GO:0003723">
    <property type="term" value="F:RNA binding"/>
    <property type="evidence" value="ECO:0007669"/>
    <property type="project" value="InterPro"/>
</dbReference>
<dbReference type="GO" id="GO:0006432">
    <property type="term" value="P:phenylalanyl-tRNA aminoacylation"/>
    <property type="evidence" value="ECO:0000314"/>
    <property type="project" value="FlyBase"/>
</dbReference>
<dbReference type="CDD" id="cd00769">
    <property type="entry name" value="PheRS_beta_core"/>
    <property type="match status" value="1"/>
</dbReference>
<dbReference type="FunFam" id="3.30.56.10:FF:000005">
    <property type="entry name" value="Phenylalanine--tRNA ligase beta subunit"/>
    <property type="match status" value="1"/>
</dbReference>
<dbReference type="FunFam" id="3.30.930.10:FF:000032">
    <property type="entry name" value="Phenylalanine--tRNA ligase beta subunit"/>
    <property type="match status" value="1"/>
</dbReference>
<dbReference type="FunFam" id="3.50.40.10:FF:000002">
    <property type="entry name" value="phenylalanine--tRNA ligase beta subunit"/>
    <property type="match status" value="1"/>
</dbReference>
<dbReference type="Gene3D" id="3.30.56.10">
    <property type="match status" value="2"/>
</dbReference>
<dbReference type="Gene3D" id="3.30.930.10">
    <property type="entry name" value="Bira Bifunctional Protein, Domain 2"/>
    <property type="match status" value="1"/>
</dbReference>
<dbReference type="Gene3D" id="3.50.40.10">
    <property type="entry name" value="Phenylalanyl-trna Synthetase, Chain B, domain 3"/>
    <property type="match status" value="1"/>
</dbReference>
<dbReference type="InterPro" id="IPR045864">
    <property type="entry name" value="aa-tRNA-synth_II/BPL/LPL"/>
</dbReference>
<dbReference type="InterPro" id="IPR005146">
    <property type="entry name" value="B3/B4_tRNA-bd"/>
</dbReference>
<dbReference type="InterPro" id="IPR009061">
    <property type="entry name" value="DNA-bd_dom_put_sf"/>
</dbReference>
<dbReference type="InterPro" id="IPR045060">
    <property type="entry name" value="Phe-tRNA-ligase_IIc_bsu"/>
</dbReference>
<dbReference type="InterPro" id="IPR004531">
    <property type="entry name" value="Phe-tRNA-synth_IIc_bsu_arc_euk"/>
</dbReference>
<dbReference type="InterPro" id="IPR020825">
    <property type="entry name" value="Phe-tRNA_synthase-like_B3/B4"/>
</dbReference>
<dbReference type="InterPro" id="IPR041616">
    <property type="entry name" value="PheRS_beta_core"/>
</dbReference>
<dbReference type="InterPro" id="IPR040659">
    <property type="entry name" value="PhetRS_B1"/>
</dbReference>
<dbReference type="InterPro" id="IPR005147">
    <property type="entry name" value="tRNA_synthase_B5-dom"/>
</dbReference>
<dbReference type="NCBIfam" id="TIGR00471">
    <property type="entry name" value="pheT_arch"/>
    <property type="match status" value="1"/>
</dbReference>
<dbReference type="PANTHER" id="PTHR10947:SF0">
    <property type="entry name" value="PHENYLALANINE--TRNA LIGASE BETA SUBUNIT"/>
    <property type="match status" value="1"/>
</dbReference>
<dbReference type="PANTHER" id="PTHR10947">
    <property type="entry name" value="PHENYLALANYL-TRNA SYNTHETASE BETA CHAIN AND LEUCINE-RICH REPEAT-CONTAINING PROTEIN 47"/>
    <property type="match status" value="1"/>
</dbReference>
<dbReference type="Pfam" id="PF03483">
    <property type="entry name" value="B3_4"/>
    <property type="match status" value="1"/>
</dbReference>
<dbReference type="Pfam" id="PF03484">
    <property type="entry name" value="B5"/>
    <property type="match status" value="1"/>
</dbReference>
<dbReference type="Pfam" id="PF18262">
    <property type="entry name" value="PhetRS_B1"/>
    <property type="match status" value="1"/>
</dbReference>
<dbReference type="Pfam" id="PF17759">
    <property type="entry name" value="tRNA_synthFbeta"/>
    <property type="match status" value="1"/>
</dbReference>
<dbReference type="SMART" id="SM00873">
    <property type="entry name" value="B3_4"/>
    <property type="match status" value="1"/>
</dbReference>
<dbReference type="SMART" id="SM00874">
    <property type="entry name" value="B5"/>
    <property type="match status" value="1"/>
</dbReference>
<dbReference type="SUPFAM" id="SSF55681">
    <property type="entry name" value="Class II aaRS and biotin synthetases"/>
    <property type="match status" value="1"/>
</dbReference>
<dbReference type="SUPFAM" id="SSF56037">
    <property type="entry name" value="PheT/TilS domain"/>
    <property type="match status" value="1"/>
</dbReference>
<dbReference type="SUPFAM" id="SSF46955">
    <property type="entry name" value="Putative DNA-binding domain"/>
    <property type="match status" value="2"/>
</dbReference>
<dbReference type="PROSITE" id="PS51483">
    <property type="entry name" value="B5"/>
    <property type="match status" value="1"/>
</dbReference>
<reference key="1">
    <citation type="journal article" date="2000" name="Science">
        <title>The genome sequence of Drosophila melanogaster.</title>
        <authorList>
            <person name="Adams M.D."/>
            <person name="Celniker S.E."/>
            <person name="Holt R.A."/>
            <person name="Evans C.A."/>
            <person name="Gocayne J.D."/>
            <person name="Amanatides P.G."/>
            <person name="Scherer S.E."/>
            <person name="Li P.W."/>
            <person name="Hoskins R.A."/>
            <person name="Galle R.F."/>
            <person name="George R.A."/>
            <person name="Lewis S.E."/>
            <person name="Richards S."/>
            <person name="Ashburner M."/>
            <person name="Henderson S.N."/>
            <person name="Sutton G.G."/>
            <person name="Wortman J.R."/>
            <person name="Yandell M.D."/>
            <person name="Zhang Q."/>
            <person name="Chen L.X."/>
            <person name="Brandon R.C."/>
            <person name="Rogers Y.-H.C."/>
            <person name="Blazej R.G."/>
            <person name="Champe M."/>
            <person name="Pfeiffer B.D."/>
            <person name="Wan K.H."/>
            <person name="Doyle C."/>
            <person name="Baxter E.G."/>
            <person name="Helt G."/>
            <person name="Nelson C.R."/>
            <person name="Miklos G.L.G."/>
            <person name="Abril J.F."/>
            <person name="Agbayani A."/>
            <person name="An H.-J."/>
            <person name="Andrews-Pfannkoch C."/>
            <person name="Baldwin D."/>
            <person name="Ballew R.M."/>
            <person name="Basu A."/>
            <person name="Baxendale J."/>
            <person name="Bayraktaroglu L."/>
            <person name="Beasley E.M."/>
            <person name="Beeson K.Y."/>
            <person name="Benos P.V."/>
            <person name="Berman B.P."/>
            <person name="Bhandari D."/>
            <person name="Bolshakov S."/>
            <person name="Borkova D."/>
            <person name="Botchan M.R."/>
            <person name="Bouck J."/>
            <person name="Brokstein P."/>
            <person name="Brottier P."/>
            <person name="Burtis K.C."/>
            <person name="Busam D.A."/>
            <person name="Butler H."/>
            <person name="Cadieu E."/>
            <person name="Center A."/>
            <person name="Chandra I."/>
            <person name="Cherry J.M."/>
            <person name="Cawley S."/>
            <person name="Dahlke C."/>
            <person name="Davenport L.B."/>
            <person name="Davies P."/>
            <person name="de Pablos B."/>
            <person name="Delcher A."/>
            <person name="Deng Z."/>
            <person name="Mays A.D."/>
            <person name="Dew I."/>
            <person name="Dietz S.M."/>
            <person name="Dodson K."/>
            <person name="Doup L.E."/>
            <person name="Downes M."/>
            <person name="Dugan-Rocha S."/>
            <person name="Dunkov B.C."/>
            <person name="Dunn P."/>
            <person name="Durbin K.J."/>
            <person name="Evangelista C.C."/>
            <person name="Ferraz C."/>
            <person name="Ferriera S."/>
            <person name="Fleischmann W."/>
            <person name="Fosler C."/>
            <person name="Gabrielian A.E."/>
            <person name="Garg N.S."/>
            <person name="Gelbart W.M."/>
            <person name="Glasser K."/>
            <person name="Glodek A."/>
            <person name="Gong F."/>
            <person name="Gorrell J.H."/>
            <person name="Gu Z."/>
            <person name="Guan P."/>
            <person name="Harris M."/>
            <person name="Harris N.L."/>
            <person name="Harvey D.A."/>
            <person name="Heiman T.J."/>
            <person name="Hernandez J.R."/>
            <person name="Houck J."/>
            <person name="Hostin D."/>
            <person name="Houston K.A."/>
            <person name="Howland T.J."/>
            <person name="Wei M.-H."/>
            <person name="Ibegwam C."/>
            <person name="Jalali M."/>
            <person name="Kalush F."/>
            <person name="Karpen G.H."/>
            <person name="Ke Z."/>
            <person name="Kennison J.A."/>
            <person name="Ketchum K.A."/>
            <person name="Kimmel B.E."/>
            <person name="Kodira C.D."/>
            <person name="Kraft C.L."/>
            <person name="Kravitz S."/>
            <person name="Kulp D."/>
            <person name="Lai Z."/>
            <person name="Lasko P."/>
            <person name="Lei Y."/>
            <person name="Levitsky A.A."/>
            <person name="Li J.H."/>
            <person name="Li Z."/>
            <person name="Liang Y."/>
            <person name="Lin X."/>
            <person name="Liu X."/>
            <person name="Mattei B."/>
            <person name="McIntosh T.C."/>
            <person name="McLeod M.P."/>
            <person name="McPherson D."/>
            <person name="Merkulov G."/>
            <person name="Milshina N.V."/>
            <person name="Mobarry C."/>
            <person name="Morris J."/>
            <person name="Moshrefi A."/>
            <person name="Mount S.M."/>
            <person name="Moy M."/>
            <person name="Murphy B."/>
            <person name="Murphy L."/>
            <person name="Muzny D.M."/>
            <person name="Nelson D.L."/>
            <person name="Nelson D.R."/>
            <person name="Nelson K.A."/>
            <person name="Nixon K."/>
            <person name="Nusskern D.R."/>
            <person name="Pacleb J.M."/>
            <person name="Palazzolo M."/>
            <person name="Pittman G.S."/>
            <person name="Pan S."/>
            <person name="Pollard J."/>
            <person name="Puri V."/>
            <person name="Reese M.G."/>
            <person name="Reinert K."/>
            <person name="Remington K."/>
            <person name="Saunders R.D.C."/>
            <person name="Scheeler F."/>
            <person name="Shen H."/>
            <person name="Shue B.C."/>
            <person name="Siden-Kiamos I."/>
            <person name="Simpson M."/>
            <person name="Skupski M.P."/>
            <person name="Smith T.J."/>
            <person name="Spier E."/>
            <person name="Spradling A.C."/>
            <person name="Stapleton M."/>
            <person name="Strong R."/>
            <person name="Sun E."/>
            <person name="Svirskas R."/>
            <person name="Tector C."/>
            <person name="Turner R."/>
            <person name="Venter E."/>
            <person name="Wang A.H."/>
            <person name="Wang X."/>
            <person name="Wang Z.-Y."/>
            <person name="Wassarman D.A."/>
            <person name="Weinstock G.M."/>
            <person name="Weissenbach J."/>
            <person name="Williams S.M."/>
            <person name="Woodage T."/>
            <person name="Worley K.C."/>
            <person name="Wu D."/>
            <person name="Yang S."/>
            <person name="Yao Q.A."/>
            <person name="Ye J."/>
            <person name="Yeh R.-F."/>
            <person name="Zaveri J.S."/>
            <person name="Zhan M."/>
            <person name="Zhang G."/>
            <person name="Zhao Q."/>
            <person name="Zheng L."/>
            <person name="Zheng X.H."/>
            <person name="Zhong F.N."/>
            <person name="Zhong W."/>
            <person name="Zhou X."/>
            <person name="Zhu S.C."/>
            <person name="Zhu X."/>
            <person name="Smith H.O."/>
            <person name="Gibbs R.A."/>
            <person name="Myers E.W."/>
            <person name="Rubin G.M."/>
            <person name="Venter J.C."/>
        </authorList>
    </citation>
    <scope>NUCLEOTIDE SEQUENCE [LARGE SCALE GENOMIC DNA]</scope>
    <source>
        <strain>Berkeley</strain>
    </source>
</reference>
<reference key="2">
    <citation type="journal article" date="2002" name="Genome Biol.">
        <title>Annotation of the Drosophila melanogaster euchromatic genome: a systematic review.</title>
        <authorList>
            <person name="Misra S."/>
            <person name="Crosby M.A."/>
            <person name="Mungall C.J."/>
            <person name="Matthews B.B."/>
            <person name="Campbell K.S."/>
            <person name="Hradecky P."/>
            <person name="Huang Y."/>
            <person name="Kaminker J.S."/>
            <person name="Millburn G.H."/>
            <person name="Prochnik S.E."/>
            <person name="Smith C.D."/>
            <person name="Tupy J.L."/>
            <person name="Whitfield E.J."/>
            <person name="Bayraktaroglu L."/>
            <person name="Berman B.P."/>
            <person name="Bettencourt B.R."/>
            <person name="Celniker S.E."/>
            <person name="de Grey A.D.N.J."/>
            <person name="Drysdale R.A."/>
            <person name="Harris N.L."/>
            <person name="Richter J."/>
            <person name="Russo S."/>
            <person name="Schroeder A.J."/>
            <person name="Shu S.Q."/>
            <person name="Stapleton M."/>
            <person name="Yamada C."/>
            <person name="Ashburner M."/>
            <person name="Gelbart W.M."/>
            <person name="Rubin G.M."/>
            <person name="Lewis S.E."/>
        </authorList>
    </citation>
    <scope>GENOME REANNOTATION</scope>
    <source>
        <strain>Berkeley</strain>
    </source>
</reference>
<reference key="3">
    <citation type="journal article" date="2002" name="Genome Biol.">
        <title>A Drosophila full-length cDNA resource.</title>
        <authorList>
            <person name="Stapleton M."/>
            <person name="Carlson J.W."/>
            <person name="Brokstein P."/>
            <person name="Yu C."/>
            <person name="Champe M."/>
            <person name="George R.A."/>
            <person name="Guarin H."/>
            <person name="Kronmiller B."/>
            <person name="Pacleb J.M."/>
            <person name="Park S."/>
            <person name="Wan K.H."/>
            <person name="Rubin G.M."/>
            <person name="Celniker S.E."/>
        </authorList>
    </citation>
    <scope>NUCLEOTIDE SEQUENCE [LARGE SCALE MRNA]</scope>
    <source>
        <strain>Berkeley</strain>
        <tissue>Embryo</tissue>
    </source>
</reference>
<reference key="4">
    <citation type="journal article" date="2014" name="Nat. Commun.">
        <title>Double-sieving-defective aminoacyl-tRNA synthetase causes protein mistranslation and affects cellular physiology and development.</title>
        <authorList>
            <person name="Lu J."/>
            <person name="Bergert M."/>
            <person name="Walther A."/>
            <person name="Suter B."/>
        </authorList>
    </citation>
    <scope>CATALYTIC ACTIVITY</scope>
    <scope>DISRUPTION PHENOTYPE</scope>
    <scope>MUTAGENESIS OF ALA-158</scope>
</reference>
<gene>
    <name evidence="6" type="primary">beta-PheRS</name>
    <name evidence="6" type="ORF">CG5706</name>
</gene>
<proteinExistence type="evidence at protein level"/>
<protein>
    <recommendedName>
        <fullName>Phenylalanine--tRNA ligase beta subunit</fullName>
        <ecNumber evidence="4">6.1.1.20</ecNumber>
    </recommendedName>
    <alternativeName>
        <fullName>Phenylalanyl-tRNA synthetase beta subunit</fullName>
        <shortName>PheRS</shortName>
    </alternativeName>
</protein>
<sequence>MPTIGVKRDLLFEALGKTYTDDEFQDLCFAFGLELDEVTTEKQMLTKEQGDVAAAANASEEIIYRIDIPANRYDLLCLEGLVTGLLVFQGKLKPPKFQFVELAKRQVLKIDPSTAQIRPYAVAAVLRNVTFTQASYNSFIDLQDKLHQNICRKRTLVAIGTHDLDTLQGPFSYEALAPDQIKFKPLNQTKEMTGSELMDFYSTHAQLKQYLPIIRESPVYPVIYDANRVVLSLPPIINGDHSKITLKTKNVFIECTATDRTKAKVVLDTIVCLFSEHCAQKFTVEPCDVVQPDGSVISYPELEVREERISVKRANAYIGIDEPAEKLADMLTRMYLEAKVDGDSLVVKIPPTRHDVIHACDIYEDVAIAYGYNNIKKSLPAFMQIAKQFPLNKLTEQLREQVAQAGFTEALTFTLCSRDDIGRKLNKNIDALPAVHIGNPKTLEFQVVRTTLLPGLLKTLVANRKMPLPLKLFEISDVVVADESTEVGARNERRVCAVNCNKTAGFEVVHGLLDRVMQLLSVPWKSASGTKGYYLQATEDPSYFPGRCANVMYDGVVIGKIGVLHPTVLQAFELTTPCSAVEFTIEPFV</sequence>
<evidence type="ECO:0000250" key="1"/>
<evidence type="ECO:0000250" key="2">
    <source>
        <dbReference type="UniProtKB" id="A5K464"/>
    </source>
</evidence>
<evidence type="ECO:0000255" key="3">
    <source>
        <dbReference type="PROSITE-ProRule" id="PRU00816"/>
    </source>
</evidence>
<evidence type="ECO:0000269" key="4">
    <source>
    </source>
</evidence>
<evidence type="ECO:0000305" key="5"/>
<evidence type="ECO:0000312" key="6">
    <source>
        <dbReference type="FlyBase" id="FBgn0039175"/>
    </source>
</evidence>
<organism>
    <name type="scientific">Drosophila melanogaster</name>
    <name type="common">Fruit fly</name>
    <dbReference type="NCBI Taxonomy" id="7227"/>
    <lineage>
        <taxon>Eukaryota</taxon>
        <taxon>Metazoa</taxon>
        <taxon>Ecdysozoa</taxon>
        <taxon>Arthropoda</taxon>
        <taxon>Hexapoda</taxon>
        <taxon>Insecta</taxon>
        <taxon>Pterygota</taxon>
        <taxon>Neoptera</taxon>
        <taxon>Endopterygota</taxon>
        <taxon>Diptera</taxon>
        <taxon>Brachycera</taxon>
        <taxon>Muscomorpha</taxon>
        <taxon>Ephydroidea</taxon>
        <taxon>Drosophilidae</taxon>
        <taxon>Drosophila</taxon>
        <taxon>Sophophora</taxon>
    </lineage>
</organism>
<name>SYFB_DROME</name>
<accession>Q9VCA5</accession>
<feature type="chain" id="PRO_0000127019" description="Phenylalanine--tRNA ligase beta subunit">
    <location>
        <begin position="1"/>
        <end position="589"/>
    </location>
</feature>
<feature type="domain" description="B5" evidence="3">
    <location>
        <begin position="302"/>
        <end position="377"/>
    </location>
</feature>
<feature type="binding site" evidence="3">
    <location>
        <position position="355"/>
    </location>
    <ligand>
        <name>Mg(2+)</name>
        <dbReference type="ChEBI" id="CHEBI:18420"/>
        <note>shared with alpha subunit</note>
    </ligand>
</feature>
<feature type="binding site" evidence="3">
    <location>
        <position position="361"/>
    </location>
    <ligand>
        <name>Mg(2+)</name>
        <dbReference type="ChEBI" id="CHEBI:18420"/>
        <note>shared with alpha subunit</note>
    </ligand>
</feature>
<feature type="binding site" evidence="3">
    <location>
        <position position="364"/>
    </location>
    <ligand>
        <name>Mg(2+)</name>
        <dbReference type="ChEBI" id="CHEBI:18420"/>
        <note>shared with alpha subunit</note>
    </ligand>
</feature>
<feature type="binding site" evidence="3">
    <location>
        <position position="365"/>
    </location>
    <ligand>
        <name>Mg(2+)</name>
        <dbReference type="ChEBI" id="CHEBI:18420"/>
        <note>shared with alpha subunit</note>
    </ligand>
</feature>
<feature type="mutagenesis site" description="Reduced survival rate after 50 days of age. Decreased aminoacylation, increased misacylation of non-cognate Tyr, increased amino acid misincorporation, ommatidia defects, neurodegeneration, impaired locomotive performance, reduced lifespan, smaller organ size due to apoptosis and increased ER stress; when associated with 'G-456' in alpha subunit." evidence="4">
    <original>A</original>
    <variation>W</variation>
    <location>
        <position position="158"/>
    </location>
</feature>
<comment type="catalytic activity">
    <reaction evidence="4">
        <text>tRNA(Phe) + L-phenylalanine + ATP = L-phenylalanyl-tRNA(Phe) + AMP + diphosphate + H(+)</text>
        <dbReference type="Rhea" id="RHEA:19413"/>
        <dbReference type="Rhea" id="RHEA-COMP:9668"/>
        <dbReference type="Rhea" id="RHEA-COMP:9699"/>
        <dbReference type="ChEBI" id="CHEBI:15378"/>
        <dbReference type="ChEBI" id="CHEBI:30616"/>
        <dbReference type="ChEBI" id="CHEBI:33019"/>
        <dbReference type="ChEBI" id="CHEBI:58095"/>
        <dbReference type="ChEBI" id="CHEBI:78442"/>
        <dbReference type="ChEBI" id="CHEBI:78531"/>
        <dbReference type="ChEBI" id="CHEBI:456215"/>
        <dbReference type="EC" id="6.1.1.20"/>
    </reaction>
</comment>
<comment type="cofactor">
    <cofactor evidence="2">
        <name>Mg(2+)</name>
        <dbReference type="ChEBI" id="CHEBI:18420"/>
    </cofactor>
</comment>
<comment type="subunit">
    <text evidence="1">Tetramer of two alpha and two beta subunits.</text>
</comment>
<comment type="subcellular location">
    <subcellularLocation>
        <location evidence="1">Cytoplasm</location>
    </subcellularLocation>
</comment>
<comment type="disruption phenotype">
    <text evidence="4">Lethal.</text>
</comment>
<comment type="similarity">
    <text evidence="5">Belongs to the phenylalanyl-tRNA synthetase beta subunit family. Type 2 subfamily.</text>
</comment>
<keyword id="KW-0030">Aminoacyl-tRNA synthetase</keyword>
<keyword id="KW-0067">ATP-binding</keyword>
<keyword id="KW-0963">Cytoplasm</keyword>
<keyword id="KW-0436">Ligase</keyword>
<keyword id="KW-0460">Magnesium</keyword>
<keyword id="KW-0479">Metal-binding</keyword>
<keyword id="KW-0547">Nucleotide-binding</keyword>
<keyword id="KW-0648">Protein biosynthesis</keyword>
<keyword id="KW-1185">Reference proteome</keyword>